<gene>
    <name evidence="1" type="primary">plsX</name>
    <name type="ordered locus">SPy_0022</name>
    <name type="ordered locus">M5005_Spy0020</name>
</gene>
<comment type="function">
    <text evidence="1">Catalyzes the reversible formation of acyl-phosphate (acyl-PO(4)) from acyl-[acyl-carrier-protein] (acyl-ACP). This enzyme utilizes acyl-ACP as fatty acyl donor, but not acyl-CoA.</text>
</comment>
<comment type="catalytic activity">
    <reaction evidence="1">
        <text>a fatty acyl-[ACP] + phosphate = an acyl phosphate + holo-[ACP]</text>
        <dbReference type="Rhea" id="RHEA:42292"/>
        <dbReference type="Rhea" id="RHEA-COMP:9685"/>
        <dbReference type="Rhea" id="RHEA-COMP:14125"/>
        <dbReference type="ChEBI" id="CHEBI:43474"/>
        <dbReference type="ChEBI" id="CHEBI:59918"/>
        <dbReference type="ChEBI" id="CHEBI:64479"/>
        <dbReference type="ChEBI" id="CHEBI:138651"/>
        <dbReference type="EC" id="2.3.1.274"/>
    </reaction>
</comment>
<comment type="pathway">
    <text evidence="1">Lipid metabolism; phospholipid metabolism.</text>
</comment>
<comment type="subunit">
    <text evidence="1">Homodimer. Probably interacts with PlsY.</text>
</comment>
<comment type="subcellular location">
    <subcellularLocation>
        <location evidence="1">Cytoplasm</location>
    </subcellularLocation>
    <text evidence="1">Associated with the membrane possibly through PlsY.</text>
</comment>
<comment type="similarity">
    <text evidence="1">Belongs to the PlsX family.</text>
</comment>
<reference key="1">
    <citation type="journal article" date="2001" name="Proc. Natl. Acad. Sci. U.S.A.">
        <title>Complete genome sequence of an M1 strain of Streptococcus pyogenes.</title>
        <authorList>
            <person name="Ferretti J.J."/>
            <person name="McShan W.M."/>
            <person name="Ajdic D.J."/>
            <person name="Savic D.J."/>
            <person name="Savic G."/>
            <person name="Lyon K."/>
            <person name="Primeaux C."/>
            <person name="Sezate S."/>
            <person name="Suvorov A.N."/>
            <person name="Kenton S."/>
            <person name="Lai H.S."/>
            <person name="Lin S.P."/>
            <person name="Qian Y."/>
            <person name="Jia H.G."/>
            <person name="Najar F.Z."/>
            <person name="Ren Q."/>
            <person name="Zhu H."/>
            <person name="Song L."/>
            <person name="White J."/>
            <person name="Yuan X."/>
            <person name="Clifton S.W."/>
            <person name="Roe B.A."/>
            <person name="McLaughlin R.E."/>
        </authorList>
    </citation>
    <scope>NUCLEOTIDE SEQUENCE [LARGE SCALE GENOMIC DNA]</scope>
    <source>
        <strain>ATCC 700294 / SF370 / Serotype M1</strain>
    </source>
</reference>
<reference key="2">
    <citation type="journal article" date="2005" name="J. Infect. Dis.">
        <title>Evolutionary origin and emergence of a highly successful clone of serotype M1 group A Streptococcus involved multiple horizontal gene transfer events.</title>
        <authorList>
            <person name="Sumby P."/>
            <person name="Porcella S.F."/>
            <person name="Madrigal A.G."/>
            <person name="Barbian K.D."/>
            <person name="Virtaneva K."/>
            <person name="Ricklefs S.M."/>
            <person name="Sturdevant D.E."/>
            <person name="Graham M.R."/>
            <person name="Vuopio-Varkila J."/>
            <person name="Hoe N.P."/>
            <person name="Musser J.M."/>
        </authorList>
    </citation>
    <scope>NUCLEOTIDE SEQUENCE [LARGE SCALE GENOMIC DNA]</scope>
    <source>
        <strain>ATCC BAA-947 / MGAS5005 / Serotype M1</strain>
    </source>
</reference>
<evidence type="ECO:0000255" key="1">
    <source>
        <dbReference type="HAMAP-Rule" id="MF_00019"/>
    </source>
</evidence>
<dbReference type="EC" id="2.3.1.274" evidence="1"/>
<dbReference type="EMBL" id="AE004092">
    <property type="protein sequence ID" value="AAK33161.1"/>
    <property type="molecule type" value="Genomic_DNA"/>
</dbReference>
<dbReference type="EMBL" id="CP000017">
    <property type="protein sequence ID" value="AAZ50639.1"/>
    <property type="molecule type" value="Genomic_DNA"/>
</dbReference>
<dbReference type="RefSeq" id="NP_268439.1">
    <property type="nucleotide sequence ID" value="NC_002737.2"/>
</dbReference>
<dbReference type="SMR" id="P65742"/>
<dbReference type="PaxDb" id="1314-HKU360_00052"/>
<dbReference type="KEGG" id="spy:SPy_0022"/>
<dbReference type="KEGG" id="spz:M5005_Spy0020"/>
<dbReference type="PATRIC" id="fig|160490.10.peg.21"/>
<dbReference type="HOGENOM" id="CLU_039379_1_1_9"/>
<dbReference type="OMA" id="HGKSNAR"/>
<dbReference type="UniPathway" id="UPA00085"/>
<dbReference type="Proteomes" id="UP000000750">
    <property type="component" value="Chromosome"/>
</dbReference>
<dbReference type="GO" id="GO:0005737">
    <property type="term" value="C:cytoplasm"/>
    <property type="evidence" value="ECO:0007669"/>
    <property type="project" value="UniProtKB-SubCell"/>
</dbReference>
<dbReference type="GO" id="GO:0043811">
    <property type="term" value="F:phosphate:acyl-[acyl carrier protein] acyltransferase activity"/>
    <property type="evidence" value="ECO:0007669"/>
    <property type="project" value="UniProtKB-UniRule"/>
</dbReference>
<dbReference type="GO" id="GO:0006633">
    <property type="term" value="P:fatty acid biosynthetic process"/>
    <property type="evidence" value="ECO:0007669"/>
    <property type="project" value="UniProtKB-UniRule"/>
</dbReference>
<dbReference type="GO" id="GO:0008654">
    <property type="term" value="P:phospholipid biosynthetic process"/>
    <property type="evidence" value="ECO:0007669"/>
    <property type="project" value="UniProtKB-KW"/>
</dbReference>
<dbReference type="Gene3D" id="3.40.718.10">
    <property type="entry name" value="Isopropylmalate Dehydrogenase"/>
    <property type="match status" value="1"/>
</dbReference>
<dbReference type="HAMAP" id="MF_00019">
    <property type="entry name" value="PlsX"/>
    <property type="match status" value="1"/>
</dbReference>
<dbReference type="InterPro" id="IPR003664">
    <property type="entry name" value="FA_synthesis"/>
</dbReference>
<dbReference type="InterPro" id="IPR012281">
    <property type="entry name" value="Phospholipid_synth_PlsX-like"/>
</dbReference>
<dbReference type="NCBIfam" id="TIGR00182">
    <property type="entry name" value="plsX"/>
    <property type="match status" value="1"/>
</dbReference>
<dbReference type="PANTHER" id="PTHR30100">
    <property type="entry name" value="FATTY ACID/PHOSPHOLIPID SYNTHESIS PROTEIN PLSX"/>
    <property type="match status" value="1"/>
</dbReference>
<dbReference type="PANTHER" id="PTHR30100:SF1">
    <property type="entry name" value="PHOSPHATE ACYLTRANSFERASE"/>
    <property type="match status" value="1"/>
</dbReference>
<dbReference type="Pfam" id="PF02504">
    <property type="entry name" value="FA_synthesis"/>
    <property type="match status" value="1"/>
</dbReference>
<dbReference type="PIRSF" id="PIRSF002465">
    <property type="entry name" value="Phsphlp_syn_PlsX"/>
    <property type="match status" value="1"/>
</dbReference>
<dbReference type="SUPFAM" id="SSF53659">
    <property type="entry name" value="Isocitrate/Isopropylmalate dehydrogenase-like"/>
    <property type="match status" value="1"/>
</dbReference>
<sequence length="335" mass="35497">MKRIAIDAMGGDNAPKAIVEGVNQAIEAFSDIEIQLYGDQTKINSYLIQSDRVAIIHTDEKIMSDDEPAKAVRRKKKASMVLAAKAVKEGKADAIISAGNTGALLAVGLFVVGRIKGVDRPGLLSTIPTVTGLGFDMLDLGANAENTAKHLHQYAILGSFYAKNVRGIANPRVGLLNNGTEETKGDPLRKATYELLTADNTISFVGNVEARELMSGVADVIVSDGFTGNAVLKSIEGTAISIMGQLKQIINSGGIKTKIGASLLKSSLYEMKKTLDYSSAGGAVLFGLKAPVVKSHGSSDVKAIFSTIKQVRTMLDTNVVGQLVEEFAKETQVND</sequence>
<proteinExistence type="inferred from homology"/>
<keyword id="KW-0963">Cytoplasm</keyword>
<keyword id="KW-0444">Lipid biosynthesis</keyword>
<keyword id="KW-0443">Lipid metabolism</keyword>
<keyword id="KW-0594">Phospholipid biosynthesis</keyword>
<keyword id="KW-1208">Phospholipid metabolism</keyword>
<keyword id="KW-1185">Reference proteome</keyword>
<keyword id="KW-0808">Transferase</keyword>
<feature type="chain" id="PRO_0000189948" description="Phosphate acyltransferase">
    <location>
        <begin position="1"/>
        <end position="335"/>
    </location>
</feature>
<name>PLSX_STRP1</name>
<protein>
    <recommendedName>
        <fullName evidence="1">Phosphate acyltransferase</fullName>
        <ecNumber evidence="1">2.3.1.274</ecNumber>
    </recommendedName>
    <alternativeName>
        <fullName evidence="1">Acyl-ACP phosphotransacylase</fullName>
    </alternativeName>
    <alternativeName>
        <fullName evidence="1">Acyl-[acyl-carrier-protein]--phosphate acyltransferase</fullName>
    </alternativeName>
    <alternativeName>
        <fullName evidence="1">Phosphate-acyl-ACP acyltransferase</fullName>
    </alternativeName>
</protein>
<accession>P65742</accession>
<accession>Q491S9</accession>
<accession>Q9A1Z5</accession>
<organism>
    <name type="scientific">Streptococcus pyogenes serotype M1</name>
    <dbReference type="NCBI Taxonomy" id="301447"/>
    <lineage>
        <taxon>Bacteria</taxon>
        <taxon>Bacillati</taxon>
        <taxon>Bacillota</taxon>
        <taxon>Bacilli</taxon>
        <taxon>Lactobacillales</taxon>
        <taxon>Streptococcaceae</taxon>
        <taxon>Streptococcus</taxon>
    </lineage>
</organism>